<dbReference type="EC" id="2.3.1.225" evidence="9"/>
<dbReference type="EMBL" id="AK292960">
    <property type="protein sequence ID" value="BAF85649.1"/>
    <property type="molecule type" value="mRNA"/>
</dbReference>
<dbReference type="EMBL" id="AL390732">
    <property type="status" value="NOT_ANNOTATED_CDS"/>
    <property type="molecule type" value="Genomic_DNA"/>
</dbReference>
<dbReference type="EMBL" id="CH471071">
    <property type="protein sequence ID" value="EAW58692.1"/>
    <property type="molecule type" value="Genomic_DNA"/>
</dbReference>
<dbReference type="EMBL" id="CH471071">
    <property type="protein sequence ID" value="EAW58693.1"/>
    <property type="molecule type" value="Genomic_DNA"/>
</dbReference>
<dbReference type="EMBL" id="BC042558">
    <property type="protein sequence ID" value="AAH42558.1"/>
    <property type="molecule type" value="mRNA"/>
</dbReference>
<dbReference type="CCDS" id="CCDS6475.1"/>
<dbReference type="RefSeq" id="NP_001341047.1">
    <property type="nucleotide sequence ID" value="NM_001354118.2"/>
</dbReference>
<dbReference type="RefSeq" id="NP_001341048.1">
    <property type="nucleotide sequence ID" value="NM_001354119.2"/>
</dbReference>
<dbReference type="RefSeq" id="NP_001341049.1">
    <property type="nucleotide sequence ID" value="NM_001354120.2"/>
</dbReference>
<dbReference type="RefSeq" id="NP_001341050.1">
    <property type="nucleotide sequence ID" value="NM_001354121.2"/>
</dbReference>
<dbReference type="RefSeq" id="NP_001341051.1">
    <property type="nucleotide sequence ID" value="NM_001354122.2"/>
</dbReference>
<dbReference type="RefSeq" id="NP_001341052.1">
    <property type="nucleotide sequence ID" value="NM_001354123.2"/>
</dbReference>
<dbReference type="RefSeq" id="NP_001341053.1">
    <property type="nucleotide sequence ID" value="NM_001354124.2"/>
</dbReference>
<dbReference type="RefSeq" id="NP_848661.1">
    <property type="nucleotide sequence ID" value="NM_178566.6"/>
</dbReference>
<dbReference type="RefSeq" id="XP_016870171.1">
    <property type="nucleotide sequence ID" value="XM_017014682.1"/>
</dbReference>
<dbReference type="RefSeq" id="XP_016870172.1">
    <property type="nucleotide sequence ID" value="XM_017014683.2"/>
</dbReference>
<dbReference type="RefSeq" id="XP_016870173.1">
    <property type="nucleotide sequence ID" value="XM_017014684.1"/>
</dbReference>
<dbReference type="RefSeq" id="XP_016870174.1">
    <property type="nucleotide sequence ID" value="XM_017014685.1"/>
</dbReference>
<dbReference type="RefSeq" id="XP_016870175.1">
    <property type="nucleotide sequence ID" value="XM_017014686.1"/>
</dbReference>
<dbReference type="RefSeq" id="XP_016870176.1">
    <property type="nucleotide sequence ID" value="XM_017014687.1"/>
</dbReference>
<dbReference type="RefSeq" id="XP_016870177.1">
    <property type="nucleotide sequence ID" value="XM_017014688.1"/>
</dbReference>
<dbReference type="RefSeq" id="XP_016870178.1">
    <property type="nucleotide sequence ID" value="XM_017014689.1"/>
</dbReference>
<dbReference type="RefSeq" id="XP_016870179.1">
    <property type="nucleotide sequence ID" value="XM_017014690.1"/>
</dbReference>
<dbReference type="RefSeq" id="XP_047279289.1">
    <property type="nucleotide sequence ID" value="XM_047423333.1"/>
</dbReference>
<dbReference type="RefSeq" id="XP_047279290.1">
    <property type="nucleotide sequence ID" value="XM_047423334.1"/>
</dbReference>
<dbReference type="RefSeq" id="XP_054218875.1">
    <property type="nucleotide sequence ID" value="XM_054362900.1"/>
</dbReference>
<dbReference type="RefSeq" id="XP_054218876.1">
    <property type="nucleotide sequence ID" value="XM_054362901.1"/>
</dbReference>
<dbReference type="RefSeq" id="XP_054218877.1">
    <property type="nucleotide sequence ID" value="XM_054362902.1"/>
</dbReference>
<dbReference type="SMR" id="Q8IVQ6"/>
<dbReference type="BioGRID" id="131055">
    <property type="interactions" value="26"/>
</dbReference>
<dbReference type="FunCoup" id="Q8IVQ6">
    <property type="interactions" value="1575"/>
</dbReference>
<dbReference type="IntAct" id="Q8IVQ6">
    <property type="interactions" value="25"/>
</dbReference>
<dbReference type="MINT" id="Q8IVQ6"/>
<dbReference type="STRING" id="9606.ENSP00000370303"/>
<dbReference type="iPTMnet" id="Q8IVQ6"/>
<dbReference type="PhosphoSitePlus" id="Q8IVQ6"/>
<dbReference type="SwissPalm" id="Q8IVQ6"/>
<dbReference type="BioMuta" id="ZDHHC21"/>
<dbReference type="DMDM" id="37999848"/>
<dbReference type="jPOST" id="Q8IVQ6"/>
<dbReference type="MassIVE" id="Q8IVQ6"/>
<dbReference type="PaxDb" id="9606-ENSP00000370303"/>
<dbReference type="PeptideAtlas" id="Q8IVQ6"/>
<dbReference type="ProteomicsDB" id="70753"/>
<dbReference type="Antibodypedia" id="42748">
    <property type="antibodies" value="113 antibodies from 19 providers"/>
</dbReference>
<dbReference type="DNASU" id="340481"/>
<dbReference type="Ensembl" id="ENST00000380916.9">
    <property type="protein sequence ID" value="ENSP00000370303.3"/>
    <property type="gene ID" value="ENSG00000175893.13"/>
</dbReference>
<dbReference type="GeneID" id="340481"/>
<dbReference type="KEGG" id="hsa:340481"/>
<dbReference type="MANE-Select" id="ENST00000380916.9">
    <property type="protein sequence ID" value="ENSP00000370303.3"/>
    <property type="RefSeq nucleotide sequence ID" value="NM_178566.6"/>
    <property type="RefSeq protein sequence ID" value="NP_848661.1"/>
</dbReference>
<dbReference type="UCSC" id="uc003zlh.3">
    <property type="organism name" value="human"/>
</dbReference>
<dbReference type="AGR" id="HGNC:20750"/>
<dbReference type="CTD" id="340481"/>
<dbReference type="DisGeNET" id="340481"/>
<dbReference type="GeneCards" id="ZDHHC21"/>
<dbReference type="HGNC" id="HGNC:20750">
    <property type="gene designation" value="ZDHHC21"/>
</dbReference>
<dbReference type="HPA" id="ENSG00000175893">
    <property type="expression patterns" value="Low tissue specificity"/>
</dbReference>
<dbReference type="MIM" id="614605">
    <property type="type" value="gene"/>
</dbReference>
<dbReference type="neXtProt" id="NX_Q8IVQ6"/>
<dbReference type="OpenTargets" id="ENSG00000175893"/>
<dbReference type="PharmGKB" id="PA134919189"/>
<dbReference type="VEuPathDB" id="HostDB:ENSG00000175893"/>
<dbReference type="eggNOG" id="KOG1311">
    <property type="taxonomic scope" value="Eukaryota"/>
</dbReference>
<dbReference type="GeneTree" id="ENSGT00940000158006"/>
<dbReference type="HOGENOM" id="CLU_048061_3_0_1"/>
<dbReference type="InParanoid" id="Q8IVQ6"/>
<dbReference type="OMA" id="HGERELW"/>
<dbReference type="OrthoDB" id="331948at2759"/>
<dbReference type="PAN-GO" id="Q8IVQ6">
    <property type="GO annotations" value="5 GO annotations based on evolutionary models"/>
</dbReference>
<dbReference type="PhylomeDB" id="Q8IVQ6"/>
<dbReference type="TreeFam" id="TF319798"/>
<dbReference type="PathwayCommons" id="Q8IVQ6"/>
<dbReference type="Reactome" id="R-HSA-203615">
    <property type="pathway name" value="eNOS activation"/>
</dbReference>
<dbReference type="Reactome" id="R-HSA-9009391">
    <property type="pathway name" value="Extra-nuclear estrogen signaling"/>
</dbReference>
<dbReference type="SignaLink" id="Q8IVQ6"/>
<dbReference type="BioGRID-ORCS" id="340481">
    <property type="hits" value="9 hits in 1119 CRISPR screens"/>
</dbReference>
<dbReference type="ChiTaRS" id="ZDHHC21">
    <property type="organism name" value="human"/>
</dbReference>
<dbReference type="GenomeRNAi" id="340481"/>
<dbReference type="Pharos" id="Q8IVQ6">
    <property type="development level" value="Tbio"/>
</dbReference>
<dbReference type="PRO" id="PR:Q8IVQ6"/>
<dbReference type="Proteomes" id="UP000005640">
    <property type="component" value="Chromosome 9"/>
</dbReference>
<dbReference type="RNAct" id="Q8IVQ6">
    <property type="molecule type" value="protein"/>
</dbReference>
<dbReference type="Bgee" id="ENSG00000175893">
    <property type="expression patterns" value="Expressed in epithelial cell of pancreas and 181 other cell types or tissues"/>
</dbReference>
<dbReference type="GO" id="GO:0005783">
    <property type="term" value="C:endoplasmic reticulum"/>
    <property type="evidence" value="ECO:0000318"/>
    <property type="project" value="GO_Central"/>
</dbReference>
<dbReference type="GO" id="GO:0005794">
    <property type="term" value="C:Golgi apparatus"/>
    <property type="evidence" value="ECO:0000314"/>
    <property type="project" value="UniProtKB"/>
</dbReference>
<dbReference type="GO" id="GO:0000139">
    <property type="term" value="C:Golgi membrane"/>
    <property type="evidence" value="ECO:0000304"/>
    <property type="project" value="Reactome"/>
</dbReference>
<dbReference type="GO" id="GO:0005886">
    <property type="term" value="C:plasma membrane"/>
    <property type="evidence" value="ECO:0000314"/>
    <property type="project" value="UniProtKB"/>
</dbReference>
<dbReference type="GO" id="GO:0016409">
    <property type="term" value="F:palmitoyltransferase activity"/>
    <property type="evidence" value="ECO:0000314"/>
    <property type="project" value="UniProtKB"/>
</dbReference>
<dbReference type="GO" id="GO:0019706">
    <property type="term" value="F:protein-cysteine S-palmitoyltransferase activity"/>
    <property type="evidence" value="ECO:0000269"/>
    <property type="project" value="Reactome"/>
</dbReference>
<dbReference type="GO" id="GO:0071875">
    <property type="term" value="P:adrenergic receptor signaling pathway"/>
    <property type="evidence" value="ECO:0000250"/>
    <property type="project" value="UniProtKB"/>
</dbReference>
<dbReference type="GO" id="GO:0001942">
    <property type="term" value="P:hair follicle development"/>
    <property type="evidence" value="ECO:0007669"/>
    <property type="project" value="Ensembl"/>
</dbReference>
<dbReference type="GO" id="GO:0046209">
    <property type="term" value="P:nitric oxide metabolic process"/>
    <property type="evidence" value="ECO:0000304"/>
    <property type="project" value="Reactome"/>
</dbReference>
<dbReference type="GO" id="GO:0018230">
    <property type="term" value="P:peptidyl-L-cysteine S-palmitoylation"/>
    <property type="evidence" value="ECO:0000315"/>
    <property type="project" value="UniProtKB"/>
</dbReference>
<dbReference type="GO" id="GO:0018345">
    <property type="term" value="P:protein palmitoylation"/>
    <property type="evidence" value="ECO:0000314"/>
    <property type="project" value="UniProtKB"/>
</dbReference>
<dbReference type="GO" id="GO:0006612">
    <property type="term" value="P:protein targeting to membrane"/>
    <property type="evidence" value="ECO:0000318"/>
    <property type="project" value="GO_Central"/>
</dbReference>
<dbReference type="GO" id="GO:1903140">
    <property type="term" value="P:regulation of establishment of endothelial barrier"/>
    <property type="evidence" value="ECO:0000250"/>
    <property type="project" value="UniProtKB"/>
</dbReference>
<dbReference type="GO" id="GO:1904997">
    <property type="term" value="P:regulation of leukocyte adhesion to arterial endothelial cell"/>
    <property type="evidence" value="ECO:0000250"/>
    <property type="project" value="UniProtKB"/>
</dbReference>
<dbReference type="GO" id="GO:0003056">
    <property type="term" value="P:regulation of vascular associated smooth muscle contraction"/>
    <property type="evidence" value="ECO:0000250"/>
    <property type="project" value="UniProtKB"/>
</dbReference>
<dbReference type="GO" id="GO:0048733">
    <property type="term" value="P:sebaceous gland development"/>
    <property type="evidence" value="ECO:0007669"/>
    <property type="project" value="Ensembl"/>
</dbReference>
<dbReference type="InterPro" id="IPR001594">
    <property type="entry name" value="Palmitoyltrfase_DHHC"/>
</dbReference>
<dbReference type="InterPro" id="IPR039859">
    <property type="entry name" value="PFA4/ZDH16/20/ERF2-like"/>
</dbReference>
<dbReference type="PANTHER" id="PTHR12246">
    <property type="entry name" value="PALMITOYLTRANSFERASE ZDHHC16"/>
    <property type="match status" value="1"/>
</dbReference>
<dbReference type="Pfam" id="PF01529">
    <property type="entry name" value="DHHC"/>
    <property type="match status" value="1"/>
</dbReference>
<dbReference type="PROSITE" id="PS50216">
    <property type="entry name" value="DHHC"/>
    <property type="match status" value="1"/>
</dbReference>
<accession>Q8IVQ6</accession>
<accession>A8KA95</accession>
<accession>D3DRI7</accession>
<accession>Q5VWG1</accession>
<reference key="1">
    <citation type="journal article" date="2004" name="Nat. Genet.">
        <title>Complete sequencing and characterization of 21,243 full-length human cDNAs.</title>
        <authorList>
            <person name="Ota T."/>
            <person name="Suzuki Y."/>
            <person name="Nishikawa T."/>
            <person name="Otsuki T."/>
            <person name="Sugiyama T."/>
            <person name="Irie R."/>
            <person name="Wakamatsu A."/>
            <person name="Hayashi K."/>
            <person name="Sato H."/>
            <person name="Nagai K."/>
            <person name="Kimura K."/>
            <person name="Makita H."/>
            <person name="Sekine M."/>
            <person name="Obayashi M."/>
            <person name="Nishi T."/>
            <person name="Shibahara T."/>
            <person name="Tanaka T."/>
            <person name="Ishii S."/>
            <person name="Yamamoto J."/>
            <person name="Saito K."/>
            <person name="Kawai Y."/>
            <person name="Isono Y."/>
            <person name="Nakamura Y."/>
            <person name="Nagahari K."/>
            <person name="Murakami K."/>
            <person name="Yasuda T."/>
            <person name="Iwayanagi T."/>
            <person name="Wagatsuma M."/>
            <person name="Shiratori A."/>
            <person name="Sudo H."/>
            <person name="Hosoiri T."/>
            <person name="Kaku Y."/>
            <person name="Kodaira H."/>
            <person name="Kondo H."/>
            <person name="Sugawara M."/>
            <person name="Takahashi M."/>
            <person name="Kanda K."/>
            <person name="Yokoi T."/>
            <person name="Furuya T."/>
            <person name="Kikkawa E."/>
            <person name="Omura Y."/>
            <person name="Abe K."/>
            <person name="Kamihara K."/>
            <person name="Katsuta N."/>
            <person name="Sato K."/>
            <person name="Tanikawa M."/>
            <person name="Yamazaki M."/>
            <person name="Ninomiya K."/>
            <person name="Ishibashi T."/>
            <person name="Yamashita H."/>
            <person name="Murakawa K."/>
            <person name="Fujimori K."/>
            <person name="Tanai H."/>
            <person name="Kimata M."/>
            <person name="Watanabe M."/>
            <person name="Hiraoka S."/>
            <person name="Chiba Y."/>
            <person name="Ishida S."/>
            <person name="Ono Y."/>
            <person name="Takiguchi S."/>
            <person name="Watanabe S."/>
            <person name="Yosida M."/>
            <person name="Hotuta T."/>
            <person name="Kusano J."/>
            <person name="Kanehori K."/>
            <person name="Takahashi-Fujii A."/>
            <person name="Hara H."/>
            <person name="Tanase T.-O."/>
            <person name="Nomura Y."/>
            <person name="Togiya S."/>
            <person name="Komai F."/>
            <person name="Hara R."/>
            <person name="Takeuchi K."/>
            <person name="Arita M."/>
            <person name="Imose N."/>
            <person name="Musashino K."/>
            <person name="Yuuki H."/>
            <person name="Oshima A."/>
            <person name="Sasaki N."/>
            <person name="Aotsuka S."/>
            <person name="Yoshikawa Y."/>
            <person name="Matsunawa H."/>
            <person name="Ichihara T."/>
            <person name="Shiohata N."/>
            <person name="Sano S."/>
            <person name="Moriya S."/>
            <person name="Momiyama H."/>
            <person name="Satoh N."/>
            <person name="Takami S."/>
            <person name="Terashima Y."/>
            <person name="Suzuki O."/>
            <person name="Nakagawa S."/>
            <person name="Senoh A."/>
            <person name="Mizoguchi H."/>
            <person name="Goto Y."/>
            <person name="Shimizu F."/>
            <person name="Wakebe H."/>
            <person name="Hishigaki H."/>
            <person name="Watanabe T."/>
            <person name="Sugiyama A."/>
            <person name="Takemoto M."/>
            <person name="Kawakami B."/>
            <person name="Yamazaki M."/>
            <person name="Watanabe K."/>
            <person name="Kumagai A."/>
            <person name="Itakura S."/>
            <person name="Fukuzumi Y."/>
            <person name="Fujimori Y."/>
            <person name="Komiyama M."/>
            <person name="Tashiro H."/>
            <person name="Tanigami A."/>
            <person name="Fujiwara T."/>
            <person name="Ono T."/>
            <person name="Yamada K."/>
            <person name="Fujii Y."/>
            <person name="Ozaki K."/>
            <person name="Hirao M."/>
            <person name="Ohmori Y."/>
            <person name="Kawabata A."/>
            <person name="Hikiji T."/>
            <person name="Kobatake N."/>
            <person name="Inagaki H."/>
            <person name="Ikema Y."/>
            <person name="Okamoto S."/>
            <person name="Okitani R."/>
            <person name="Kawakami T."/>
            <person name="Noguchi S."/>
            <person name="Itoh T."/>
            <person name="Shigeta K."/>
            <person name="Senba T."/>
            <person name="Matsumura K."/>
            <person name="Nakajima Y."/>
            <person name="Mizuno T."/>
            <person name="Morinaga M."/>
            <person name="Sasaki M."/>
            <person name="Togashi T."/>
            <person name="Oyama M."/>
            <person name="Hata H."/>
            <person name="Watanabe M."/>
            <person name="Komatsu T."/>
            <person name="Mizushima-Sugano J."/>
            <person name="Satoh T."/>
            <person name="Shirai Y."/>
            <person name="Takahashi Y."/>
            <person name="Nakagawa K."/>
            <person name="Okumura K."/>
            <person name="Nagase T."/>
            <person name="Nomura N."/>
            <person name="Kikuchi H."/>
            <person name="Masuho Y."/>
            <person name="Yamashita R."/>
            <person name="Nakai K."/>
            <person name="Yada T."/>
            <person name="Nakamura Y."/>
            <person name="Ohara O."/>
            <person name="Isogai T."/>
            <person name="Sugano S."/>
        </authorList>
    </citation>
    <scope>NUCLEOTIDE SEQUENCE [LARGE SCALE MRNA]</scope>
    <source>
        <tissue>Trachea</tissue>
    </source>
</reference>
<reference key="2">
    <citation type="journal article" date="2004" name="Nature">
        <title>DNA sequence and analysis of human chromosome 9.</title>
        <authorList>
            <person name="Humphray S.J."/>
            <person name="Oliver K."/>
            <person name="Hunt A.R."/>
            <person name="Plumb R.W."/>
            <person name="Loveland J.E."/>
            <person name="Howe K.L."/>
            <person name="Andrews T.D."/>
            <person name="Searle S."/>
            <person name="Hunt S.E."/>
            <person name="Scott C.E."/>
            <person name="Jones M.C."/>
            <person name="Ainscough R."/>
            <person name="Almeida J.P."/>
            <person name="Ambrose K.D."/>
            <person name="Ashwell R.I.S."/>
            <person name="Babbage A.K."/>
            <person name="Babbage S."/>
            <person name="Bagguley C.L."/>
            <person name="Bailey J."/>
            <person name="Banerjee R."/>
            <person name="Barker D.J."/>
            <person name="Barlow K.F."/>
            <person name="Bates K."/>
            <person name="Beasley H."/>
            <person name="Beasley O."/>
            <person name="Bird C.P."/>
            <person name="Bray-Allen S."/>
            <person name="Brown A.J."/>
            <person name="Brown J.Y."/>
            <person name="Burford D."/>
            <person name="Burrill W."/>
            <person name="Burton J."/>
            <person name="Carder C."/>
            <person name="Carter N.P."/>
            <person name="Chapman J.C."/>
            <person name="Chen Y."/>
            <person name="Clarke G."/>
            <person name="Clark S.Y."/>
            <person name="Clee C.M."/>
            <person name="Clegg S."/>
            <person name="Collier R.E."/>
            <person name="Corby N."/>
            <person name="Crosier M."/>
            <person name="Cummings A.T."/>
            <person name="Davies J."/>
            <person name="Dhami P."/>
            <person name="Dunn M."/>
            <person name="Dutta I."/>
            <person name="Dyer L.W."/>
            <person name="Earthrowl M.E."/>
            <person name="Faulkner L."/>
            <person name="Fleming C.J."/>
            <person name="Frankish A."/>
            <person name="Frankland J.A."/>
            <person name="French L."/>
            <person name="Fricker D.G."/>
            <person name="Garner P."/>
            <person name="Garnett J."/>
            <person name="Ghori J."/>
            <person name="Gilbert J.G.R."/>
            <person name="Glison C."/>
            <person name="Grafham D.V."/>
            <person name="Gribble S."/>
            <person name="Griffiths C."/>
            <person name="Griffiths-Jones S."/>
            <person name="Grocock R."/>
            <person name="Guy J."/>
            <person name="Hall R.E."/>
            <person name="Hammond S."/>
            <person name="Harley J.L."/>
            <person name="Harrison E.S.I."/>
            <person name="Hart E.A."/>
            <person name="Heath P.D."/>
            <person name="Henderson C.D."/>
            <person name="Hopkins B.L."/>
            <person name="Howard P.J."/>
            <person name="Howden P.J."/>
            <person name="Huckle E."/>
            <person name="Johnson C."/>
            <person name="Johnson D."/>
            <person name="Joy A.A."/>
            <person name="Kay M."/>
            <person name="Keenan S."/>
            <person name="Kershaw J.K."/>
            <person name="Kimberley A.M."/>
            <person name="King A."/>
            <person name="Knights A."/>
            <person name="Laird G.K."/>
            <person name="Langford C."/>
            <person name="Lawlor S."/>
            <person name="Leongamornlert D.A."/>
            <person name="Leversha M."/>
            <person name="Lloyd C."/>
            <person name="Lloyd D.M."/>
            <person name="Lovell J."/>
            <person name="Martin S."/>
            <person name="Mashreghi-Mohammadi M."/>
            <person name="Matthews L."/>
            <person name="McLaren S."/>
            <person name="McLay K.E."/>
            <person name="McMurray A."/>
            <person name="Milne S."/>
            <person name="Nickerson T."/>
            <person name="Nisbett J."/>
            <person name="Nordsiek G."/>
            <person name="Pearce A.V."/>
            <person name="Peck A.I."/>
            <person name="Porter K.M."/>
            <person name="Pandian R."/>
            <person name="Pelan S."/>
            <person name="Phillimore B."/>
            <person name="Povey S."/>
            <person name="Ramsey Y."/>
            <person name="Rand V."/>
            <person name="Scharfe M."/>
            <person name="Sehra H.K."/>
            <person name="Shownkeen R."/>
            <person name="Sims S.K."/>
            <person name="Skuce C.D."/>
            <person name="Smith M."/>
            <person name="Steward C.A."/>
            <person name="Swarbreck D."/>
            <person name="Sycamore N."/>
            <person name="Tester J."/>
            <person name="Thorpe A."/>
            <person name="Tracey A."/>
            <person name="Tromans A."/>
            <person name="Thomas D.W."/>
            <person name="Wall M."/>
            <person name="Wallis J.M."/>
            <person name="West A.P."/>
            <person name="Whitehead S.L."/>
            <person name="Willey D.L."/>
            <person name="Williams S.A."/>
            <person name="Wilming L."/>
            <person name="Wray P.W."/>
            <person name="Young L."/>
            <person name="Ashurst J.L."/>
            <person name="Coulson A."/>
            <person name="Blocker H."/>
            <person name="Durbin R.M."/>
            <person name="Sulston J.E."/>
            <person name="Hubbard T."/>
            <person name="Jackson M.J."/>
            <person name="Bentley D.R."/>
            <person name="Beck S."/>
            <person name="Rogers J."/>
            <person name="Dunham I."/>
        </authorList>
    </citation>
    <scope>NUCLEOTIDE SEQUENCE [LARGE SCALE GENOMIC DNA]</scope>
</reference>
<reference key="3">
    <citation type="submission" date="2005-09" db="EMBL/GenBank/DDBJ databases">
        <authorList>
            <person name="Mural R.J."/>
            <person name="Istrail S."/>
            <person name="Sutton G.G."/>
            <person name="Florea L."/>
            <person name="Halpern A.L."/>
            <person name="Mobarry C.M."/>
            <person name="Lippert R."/>
            <person name="Walenz B."/>
            <person name="Shatkay H."/>
            <person name="Dew I."/>
            <person name="Miller J.R."/>
            <person name="Flanigan M.J."/>
            <person name="Edwards N.J."/>
            <person name="Bolanos R."/>
            <person name="Fasulo D."/>
            <person name="Halldorsson B.V."/>
            <person name="Hannenhalli S."/>
            <person name="Turner R."/>
            <person name="Yooseph S."/>
            <person name="Lu F."/>
            <person name="Nusskern D.R."/>
            <person name="Shue B.C."/>
            <person name="Zheng X.H."/>
            <person name="Zhong F."/>
            <person name="Delcher A.L."/>
            <person name="Huson D.H."/>
            <person name="Kravitz S.A."/>
            <person name="Mouchard L."/>
            <person name="Reinert K."/>
            <person name="Remington K.A."/>
            <person name="Clark A.G."/>
            <person name="Waterman M.S."/>
            <person name="Eichler E.E."/>
            <person name="Adams M.D."/>
            <person name="Hunkapiller M.W."/>
            <person name="Myers E.W."/>
            <person name="Venter J.C."/>
        </authorList>
    </citation>
    <scope>NUCLEOTIDE SEQUENCE [LARGE SCALE GENOMIC DNA]</scope>
</reference>
<reference key="4">
    <citation type="journal article" date="2004" name="Genome Res.">
        <title>The status, quality, and expansion of the NIH full-length cDNA project: the Mammalian Gene Collection (MGC).</title>
        <authorList>
            <consortium name="The MGC Project Team"/>
        </authorList>
    </citation>
    <scope>NUCLEOTIDE SEQUENCE [LARGE SCALE MRNA]</scope>
    <source>
        <tissue>Testis</tissue>
    </source>
</reference>
<reference key="5">
    <citation type="journal article" date="2006" name="Biochim. Biophys. Acta">
        <title>Intracellular localization and tissue-specific distribution of human and yeast DHHC cysteine-rich domain-containing proteins.</title>
        <authorList>
            <person name="Ohno Y."/>
            <person name="Kihara A."/>
            <person name="Sano T."/>
            <person name="Igarashi Y."/>
        </authorList>
    </citation>
    <scope>SUBCELLULAR LOCATION</scope>
    <scope>TISSUE SPECIFICITY</scope>
</reference>
<reference key="6">
    <citation type="journal article" date="2012" name="Mol. Biol. Cell">
        <title>DHHC-7 and -21 are palmitoylacyltransferases for sex steroid receptors.</title>
        <authorList>
            <person name="Pedram A."/>
            <person name="Razandi M."/>
            <person name="Deschenes R.J."/>
            <person name="Levin E.R."/>
        </authorList>
    </citation>
    <scope>FUNCTION</scope>
    <scope>CATALYTIC ACTIVITY</scope>
    <scope>SUBCELLULAR LOCATION</scope>
</reference>
<proteinExistence type="evidence at protein level"/>
<name>ZDH21_HUMAN</name>
<evidence type="ECO:0000250" key="1">
    <source>
        <dbReference type="UniProtKB" id="Q8IUH5"/>
    </source>
</evidence>
<evidence type="ECO:0000250" key="2">
    <source>
        <dbReference type="UniProtKB" id="Q9D270"/>
    </source>
</evidence>
<evidence type="ECO:0000255" key="3"/>
<evidence type="ECO:0000255" key="4">
    <source>
        <dbReference type="PROSITE-ProRule" id="PRU00067"/>
    </source>
</evidence>
<evidence type="ECO:0000269" key="5">
    <source>
    </source>
</evidence>
<evidence type="ECO:0000269" key="6">
    <source>
    </source>
</evidence>
<evidence type="ECO:0000303" key="7">
    <source>
    </source>
</evidence>
<evidence type="ECO:0000305" key="8"/>
<evidence type="ECO:0000305" key="9">
    <source>
    </source>
</evidence>
<evidence type="ECO:0000312" key="10">
    <source>
        <dbReference type="HGNC" id="HGNC:20750"/>
    </source>
</evidence>
<organism>
    <name type="scientific">Homo sapiens</name>
    <name type="common">Human</name>
    <dbReference type="NCBI Taxonomy" id="9606"/>
    <lineage>
        <taxon>Eukaryota</taxon>
        <taxon>Metazoa</taxon>
        <taxon>Chordata</taxon>
        <taxon>Craniata</taxon>
        <taxon>Vertebrata</taxon>
        <taxon>Euteleostomi</taxon>
        <taxon>Mammalia</taxon>
        <taxon>Eutheria</taxon>
        <taxon>Euarchontoglires</taxon>
        <taxon>Primates</taxon>
        <taxon>Haplorrhini</taxon>
        <taxon>Catarrhini</taxon>
        <taxon>Hominidae</taxon>
        <taxon>Homo</taxon>
    </lineage>
</organism>
<protein>
    <recommendedName>
        <fullName evidence="8">Palmitoyltransferase ZDHHC21</fullName>
        <ecNumber evidence="9">2.3.1.225</ecNumber>
    </recommendedName>
    <alternativeName>
        <fullName evidence="7">DHHC domain-containing cysteine-rich protein 21</fullName>
        <shortName evidence="7">DHHC-21</shortName>
    </alternativeName>
    <alternativeName>
        <fullName evidence="10">Zinc finger DHHC domain-containing protein 21</fullName>
    </alternativeName>
</protein>
<sequence length="265" mass="31385">MGLRIHFVVDPHGWCCMGLIVFVWLYNIVLIPKIVLFPHYEEGHIPGILIIIFYGISIFCLVALVRASITDPGRLPENPKIPHGEREFWELCNKCNLMRPKRSHHCSRCGHCVRRMDHHCPWINNCVGEDNHWLFLQLCFYTELLTCYALMFSFCHYYYFLPLKKRNLDLFVFRHELAIMRLAAFMGITMLVGITGLFYTQLIGIITDTTSIEKMSNCCEDISRPRKPWQQTFSEVFGTRWKILWFIPFRQRQPLRVPYHFANHV</sequence>
<comment type="function">
    <text evidence="2 6">Palmitoyltransferase that catalyzes the addition of palmitate onto various protein substrates (PubMed:22031296). Palmitoylates sex steroid hormone receptors, including ESR1, PGR and AR, thereby regulating their targeting to the plasma membrane (PubMed:22031296). This affects rapid intracellular signaling by sex hormones via ERK and AKT kinases and the generation of cAMP, but does not affect that mediated by their nuclear receptor (PubMed:22031296). Palmitoylates FYN, regulates its localization in hair follicles and plays a key role in epidermal homeostasis and hair follicle differentiation. Through the palmitoylation of PLCB1 and the regulation of PLCB1 downstream signaling may indirectly regulate the function of the endothelial barrier and the adhesion of leukocytes to the endothelium. Also has a palmitoyltransferase activity toward ADRA1D, positively regulating its activity and expression and may thereby play a role in vascular contraction. May also palmitoylate eNOS and LCK (By similarity).</text>
</comment>
<comment type="catalytic activity">
    <reaction evidence="9">
        <text>L-cysteinyl-[protein] + hexadecanoyl-CoA = S-hexadecanoyl-L-cysteinyl-[protein] + CoA</text>
        <dbReference type="Rhea" id="RHEA:36683"/>
        <dbReference type="Rhea" id="RHEA-COMP:10131"/>
        <dbReference type="Rhea" id="RHEA-COMP:11032"/>
        <dbReference type="ChEBI" id="CHEBI:29950"/>
        <dbReference type="ChEBI" id="CHEBI:57287"/>
        <dbReference type="ChEBI" id="CHEBI:57379"/>
        <dbReference type="ChEBI" id="CHEBI:74151"/>
        <dbReference type="EC" id="2.3.1.225"/>
    </reaction>
    <physiologicalReaction direction="left-to-right" evidence="9">
        <dbReference type="Rhea" id="RHEA:36684"/>
    </physiologicalReaction>
</comment>
<comment type="interaction">
    <interactant intactId="EBI-2849773">
        <id>Q8IVQ6</id>
    </interactant>
    <interactant intactId="EBI-13059134">
        <id>Q13520</id>
        <label>AQP6</label>
    </interactant>
    <organismsDiffer>false</organismsDiffer>
    <experiments>3</experiments>
</comment>
<comment type="interaction">
    <interactant intactId="EBI-2849773">
        <id>Q8IVQ6</id>
    </interactant>
    <interactant intactId="EBI-17447707">
        <id>Q9H9P2</id>
        <label>CHODL</label>
    </interactant>
    <organismsDiffer>false</organismsDiffer>
    <experiments>3</experiments>
</comment>
<comment type="interaction">
    <interactant intactId="EBI-2849773">
        <id>Q8IVQ6</id>
    </interactant>
    <interactant intactId="EBI-18535450">
        <id>Q9GZR5</id>
        <label>ELOVL4</label>
    </interactant>
    <organismsDiffer>false</organismsDiffer>
    <experiments>3</experiments>
</comment>
<comment type="interaction">
    <interactant intactId="EBI-2849773">
        <id>Q8IVQ6</id>
    </interactant>
    <interactant intactId="EBI-781551">
        <id>Q9Y282</id>
        <label>ERGIC3</label>
    </interactant>
    <organismsDiffer>false</organismsDiffer>
    <experiments>3</experiments>
</comment>
<comment type="interaction">
    <interactant intactId="EBI-2849773">
        <id>Q8IVQ6</id>
    </interactant>
    <interactant intactId="EBI-18938272">
        <id>Q96KR6</id>
        <label>FAM210B</label>
    </interactant>
    <organismsDiffer>false</organismsDiffer>
    <experiments>3</experiments>
</comment>
<comment type="interaction">
    <interactant intactId="EBI-2849773">
        <id>Q8IVQ6</id>
    </interactant>
    <interactant intactId="EBI-7825321">
        <id>Q96E29</id>
        <label>MTERF3</label>
    </interactant>
    <organismsDiffer>false</organismsDiffer>
    <experiments>3</experiments>
</comment>
<comment type="interaction">
    <interactant intactId="EBI-2849773">
        <id>Q8IVQ6</id>
    </interactant>
    <interactant intactId="EBI-17263240">
        <id>P15941-11</id>
        <label>MUC1</label>
    </interactant>
    <organismsDiffer>false</organismsDiffer>
    <experiments>3</experiments>
</comment>
<comment type="interaction">
    <interactant intactId="EBI-2849773">
        <id>Q8IVQ6</id>
    </interactant>
    <interactant intactId="EBI-1050125">
        <id>O15173</id>
        <label>PGRMC2</label>
    </interactant>
    <organismsDiffer>false</organismsDiffer>
    <experiments>3</experiments>
</comment>
<comment type="interaction">
    <interactant intactId="EBI-2849773">
        <id>Q8IVQ6</id>
    </interactant>
    <interactant intactId="EBI-18397230">
        <id>Q6P5S7</id>
        <label>RNASEK</label>
    </interactant>
    <organismsDiffer>false</organismsDiffer>
    <experiments>3</experiments>
</comment>
<comment type="interaction">
    <interactant intactId="EBI-2849773">
        <id>Q8IVQ6</id>
    </interactant>
    <interactant intactId="EBI-17684533">
        <id>Q9NRX6</id>
        <label>TMEM167B</label>
    </interactant>
    <organismsDiffer>false</organismsDiffer>
    <experiments>3</experiments>
</comment>
<comment type="interaction">
    <interactant intactId="EBI-2849773">
        <id>Q8IVQ6</id>
    </interactant>
    <interactant intactId="EBI-10262539">
        <id>Q8IWR1</id>
        <label>TRIM59</label>
    </interactant>
    <organismsDiffer>false</organismsDiffer>
    <experiments>3</experiments>
</comment>
<comment type="subcellular location">
    <subcellularLocation>
        <location evidence="9">Golgi apparatus membrane</location>
        <topology evidence="3">Multi-pass membrane protein</topology>
    </subcellularLocation>
    <subcellularLocation>
        <location evidence="2">Golgi apparatus</location>
        <location evidence="2">cis-Golgi network membrane</location>
        <topology evidence="3">Multi-pass membrane protein</topology>
    </subcellularLocation>
    <subcellularLocation>
        <location evidence="5">Cell membrane</location>
        <topology evidence="3">Multi-pass membrane protein</topology>
    </subcellularLocation>
</comment>
<comment type="tissue specificity">
    <text evidence="5">Widely expressed.</text>
</comment>
<comment type="domain">
    <text evidence="1">The DHHC domain is required for palmitoyltransferase activity.</text>
</comment>
<comment type="similarity">
    <text evidence="8">Belongs to the DHHC palmitoyltransferase family.</text>
</comment>
<feature type="chain" id="PRO_0000212908" description="Palmitoyltransferase ZDHHC21">
    <location>
        <begin position="1"/>
        <end position="265"/>
    </location>
</feature>
<feature type="topological domain" description="Cytoplasmic" evidence="8">
    <location>
        <begin position="1"/>
        <end position="16"/>
    </location>
</feature>
<feature type="transmembrane region" description="Helical" evidence="3">
    <location>
        <begin position="17"/>
        <end position="37"/>
    </location>
</feature>
<feature type="topological domain" description="Extracellular" evidence="8">
    <location>
        <begin position="38"/>
        <end position="44"/>
    </location>
</feature>
<feature type="transmembrane region" description="Helical" evidence="3">
    <location>
        <begin position="45"/>
        <end position="65"/>
    </location>
</feature>
<feature type="topological domain" description="Cytoplasmic" evidence="8">
    <location>
        <begin position="66"/>
        <end position="133"/>
    </location>
</feature>
<feature type="transmembrane region" description="Helical" evidence="3">
    <location>
        <begin position="134"/>
        <end position="154"/>
    </location>
</feature>
<feature type="topological domain" description="Extracellular" evidence="8">
    <location>
        <begin position="155"/>
        <end position="185"/>
    </location>
</feature>
<feature type="transmembrane region" description="Helical" evidence="3">
    <location>
        <begin position="186"/>
        <end position="206"/>
    </location>
</feature>
<feature type="topological domain" description="Cytoplasmic" evidence="8">
    <location>
        <begin position="207"/>
        <end position="265"/>
    </location>
</feature>
<feature type="domain" description="DHHC" evidence="4">
    <location>
        <begin position="90"/>
        <end position="140"/>
    </location>
</feature>
<feature type="active site" description="S-palmitoyl cysteine intermediate" evidence="2">
    <location>
        <position position="120"/>
    </location>
</feature>
<keyword id="KW-0012">Acyltransferase</keyword>
<keyword id="KW-1003">Cell membrane</keyword>
<keyword id="KW-0333">Golgi apparatus</keyword>
<keyword id="KW-0449">Lipoprotein</keyword>
<keyword id="KW-0472">Membrane</keyword>
<keyword id="KW-0564">Palmitate</keyword>
<keyword id="KW-1267">Proteomics identification</keyword>
<keyword id="KW-1185">Reference proteome</keyword>
<keyword id="KW-0808">Transferase</keyword>
<keyword id="KW-0812">Transmembrane</keyword>
<keyword id="KW-1133">Transmembrane helix</keyword>
<gene>
    <name evidence="10" type="primary">ZDHHC21</name>
</gene>